<sequence>MNNARPIRRALISVSDKTGIVEFAQALAERGVDILSTGGTARLLAEKGISVTEVSDYTGFPEMMDGRVKTLHPKVHGGVLGRRGQDDGIMEQHGINPIDMVVVNLYPFAETVAKEGCTLADAVENIDIGGPTMVRSAAKNHKDVTIVVNAHDYDRVITEMDANEKSLTLETRFDLAIAAFEHTASYDGMIANYFGTMVPSYGENKEGDEESKFPRTFNQQFEKKQDMRYGENSHQAAAFYVEANPEEASVSTARQIQGKALSYNNIADTDAALECVKEFDEPACVIVKHANPCGVALGKNILEAYDRAFKTDPTSAFGGIIAFNRELDAATATAITERQFVEVIIAPSVSAEAVEIVAAKKNLRLLECGEWTTKTTGFDVKRVNGGLLVQDRDQGMVSEDDLQVVSKRQPTAEELKDALFCWKVAKYVKSNAIVYSKGDMTIGVGAGQMSRVYSAKIAGIKAADEGLQVEGCVMASDAFFPFRDGIDAAAEAGIKCVIQPGGSMRDNEVIEAADEHGMAMIFTGMRHFRH</sequence>
<dbReference type="EC" id="2.1.2.3" evidence="1"/>
<dbReference type="EC" id="3.5.4.10" evidence="1"/>
<dbReference type="EMBL" id="CP001139">
    <property type="protein sequence ID" value="ACH67096.1"/>
    <property type="molecule type" value="Genomic_DNA"/>
</dbReference>
<dbReference type="RefSeq" id="WP_012534194.1">
    <property type="nucleotide sequence ID" value="NC_011184.1"/>
</dbReference>
<dbReference type="SMR" id="B5FC70"/>
<dbReference type="KEGG" id="vfm:VFMJ11_2512"/>
<dbReference type="HOGENOM" id="CLU_016316_5_2_6"/>
<dbReference type="UniPathway" id="UPA00074">
    <property type="reaction ID" value="UER00133"/>
</dbReference>
<dbReference type="UniPathway" id="UPA00074">
    <property type="reaction ID" value="UER00135"/>
</dbReference>
<dbReference type="Proteomes" id="UP000001857">
    <property type="component" value="Chromosome I"/>
</dbReference>
<dbReference type="GO" id="GO:0005829">
    <property type="term" value="C:cytosol"/>
    <property type="evidence" value="ECO:0007669"/>
    <property type="project" value="TreeGrafter"/>
</dbReference>
<dbReference type="GO" id="GO:0003937">
    <property type="term" value="F:IMP cyclohydrolase activity"/>
    <property type="evidence" value="ECO:0007669"/>
    <property type="project" value="UniProtKB-UniRule"/>
</dbReference>
<dbReference type="GO" id="GO:0004643">
    <property type="term" value="F:phosphoribosylaminoimidazolecarboxamide formyltransferase activity"/>
    <property type="evidence" value="ECO:0007669"/>
    <property type="project" value="UniProtKB-UniRule"/>
</dbReference>
<dbReference type="GO" id="GO:0006189">
    <property type="term" value="P:'de novo' IMP biosynthetic process"/>
    <property type="evidence" value="ECO:0007669"/>
    <property type="project" value="UniProtKB-UniRule"/>
</dbReference>
<dbReference type="CDD" id="cd01421">
    <property type="entry name" value="IMPCH"/>
    <property type="match status" value="1"/>
</dbReference>
<dbReference type="FunFam" id="3.40.140.20:FF:000001">
    <property type="entry name" value="Bifunctional purine biosynthesis protein PurH"/>
    <property type="match status" value="1"/>
</dbReference>
<dbReference type="FunFam" id="3.40.140.20:FF:000002">
    <property type="entry name" value="Bifunctional purine biosynthesis protein PurH"/>
    <property type="match status" value="1"/>
</dbReference>
<dbReference type="FunFam" id="3.40.50.1380:FF:000001">
    <property type="entry name" value="Bifunctional purine biosynthesis protein PurH"/>
    <property type="match status" value="1"/>
</dbReference>
<dbReference type="Gene3D" id="3.40.140.20">
    <property type="match status" value="2"/>
</dbReference>
<dbReference type="Gene3D" id="3.40.50.1380">
    <property type="entry name" value="Methylglyoxal synthase-like domain"/>
    <property type="match status" value="1"/>
</dbReference>
<dbReference type="HAMAP" id="MF_00139">
    <property type="entry name" value="PurH"/>
    <property type="match status" value="1"/>
</dbReference>
<dbReference type="InterPro" id="IPR024051">
    <property type="entry name" value="AICAR_Tfase_dup_dom_sf"/>
</dbReference>
<dbReference type="InterPro" id="IPR016193">
    <property type="entry name" value="Cytidine_deaminase-like"/>
</dbReference>
<dbReference type="InterPro" id="IPR011607">
    <property type="entry name" value="MGS-like_dom"/>
</dbReference>
<dbReference type="InterPro" id="IPR036914">
    <property type="entry name" value="MGS-like_dom_sf"/>
</dbReference>
<dbReference type="InterPro" id="IPR002695">
    <property type="entry name" value="PurH-like"/>
</dbReference>
<dbReference type="NCBIfam" id="NF002049">
    <property type="entry name" value="PRK00881.1"/>
    <property type="match status" value="1"/>
</dbReference>
<dbReference type="NCBIfam" id="TIGR00355">
    <property type="entry name" value="purH"/>
    <property type="match status" value="1"/>
</dbReference>
<dbReference type="PANTHER" id="PTHR11692:SF0">
    <property type="entry name" value="BIFUNCTIONAL PURINE BIOSYNTHESIS PROTEIN ATIC"/>
    <property type="match status" value="1"/>
</dbReference>
<dbReference type="PANTHER" id="PTHR11692">
    <property type="entry name" value="BIFUNCTIONAL PURINE BIOSYNTHESIS PROTEIN PURH"/>
    <property type="match status" value="1"/>
</dbReference>
<dbReference type="Pfam" id="PF01808">
    <property type="entry name" value="AICARFT_IMPCHas"/>
    <property type="match status" value="1"/>
</dbReference>
<dbReference type="Pfam" id="PF02142">
    <property type="entry name" value="MGS"/>
    <property type="match status" value="1"/>
</dbReference>
<dbReference type="PIRSF" id="PIRSF000414">
    <property type="entry name" value="AICARFT_IMPCHas"/>
    <property type="match status" value="1"/>
</dbReference>
<dbReference type="SMART" id="SM00798">
    <property type="entry name" value="AICARFT_IMPCHas"/>
    <property type="match status" value="1"/>
</dbReference>
<dbReference type="SMART" id="SM00851">
    <property type="entry name" value="MGS"/>
    <property type="match status" value="1"/>
</dbReference>
<dbReference type="SUPFAM" id="SSF53927">
    <property type="entry name" value="Cytidine deaminase-like"/>
    <property type="match status" value="1"/>
</dbReference>
<dbReference type="SUPFAM" id="SSF52335">
    <property type="entry name" value="Methylglyoxal synthase-like"/>
    <property type="match status" value="1"/>
</dbReference>
<dbReference type="PROSITE" id="PS51855">
    <property type="entry name" value="MGS"/>
    <property type="match status" value="1"/>
</dbReference>
<name>PUR9_ALIFM</name>
<keyword id="KW-0378">Hydrolase</keyword>
<keyword id="KW-0511">Multifunctional enzyme</keyword>
<keyword id="KW-0658">Purine biosynthesis</keyword>
<keyword id="KW-0808">Transferase</keyword>
<comment type="catalytic activity">
    <reaction evidence="1">
        <text>(6R)-10-formyltetrahydrofolate + 5-amino-1-(5-phospho-beta-D-ribosyl)imidazole-4-carboxamide = 5-formamido-1-(5-phospho-D-ribosyl)imidazole-4-carboxamide + (6S)-5,6,7,8-tetrahydrofolate</text>
        <dbReference type="Rhea" id="RHEA:22192"/>
        <dbReference type="ChEBI" id="CHEBI:57453"/>
        <dbReference type="ChEBI" id="CHEBI:58467"/>
        <dbReference type="ChEBI" id="CHEBI:58475"/>
        <dbReference type="ChEBI" id="CHEBI:195366"/>
        <dbReference type="EC" id="2.1.2.3"/>
    </reaction>
</comment>
<comment type="catalytic activity">
    <reaction evidence="1">
        <text>IMP + H2O = 5-formamido-1-(5-phospho-D-ribosyl)imidazole-4-carboxamide</text>
        <dbReference type="Rhea" id="RHEA:18445"/>
        <dbReference type="ChEBI" id="CHEBI:15377"/>
        <dbReference type="ChEBI" id="CHEBI:58053"/>
        <dbReference type="ChEBI" id="CHEBI:58467"/>
        <dbReference type="EC" id="3.5.4.10"/>
    </reaction>
</comment>
<comment type="pathway">
    <text evidence="1">Purine metabolism; IMP biosynthesis via de novo pathway; 5-formamido-1-(5-phospho-D-ribosyl)imidazole-4-carboxamide from 5-amino-1-(5-phospho-D-ribosyl)imidazole-4-carboxamide (10-formyl THF route): step 1/1.</text>
</comment>
<comment type="pathway">
    <text evidence="1">Purine metabolism; IMP biosynthesis via de novo pathway; IMP from 5-formamido-1-(5-phospho-D-ribosyl)imidazole-4-carboxamide: step 1/1.</text>
</comment>
<comment type="domain">
    <text evidence="1">The IMP cyclohydrolase activity resides in the N-terminal region.</text>
</comment>
<comment type="similarity">
    <text evidence="1">Belongs to the PurH family.</text>
</comment>
<accession>B5FC70</accession>
<reference key="1">
    <citation type="submission" date="2008-08" db="EMBL/GenBank/DDBJ databases">
        <title>Complete sequence of Vibrio fischeri strain MJ11.</title>
        <authorList>
            <person name="Mandel M.J."/>
            <person name="Stabb E.V."/>
            <person name="Ruby E.G."/>
            <person name="Ferriera S."/>
            <person name="Johnson J."/>
            <person name="Kravitz S."/>
            <person name="Beeson K."/>
            <person name="Sutton G."/>
            <person name="Rogers Y.-H."/>
            <person name="Friedman R."/>
            <person name="Frazier M."/>
            <person name="Venter J.C."/>
        </authorList>
    </citation>
    <scope>NUCLEOTIDE SEQUENCE [LARGE SCALE GENOMIC DNA]</scope>
    <source>
        <strain>MJ11</strain>
    </source>
</reference>
<evidence type="ECO:0000255" key="1">
    <source>
        <dbReference type="HAMAP-Rule" id="MF_00139"/>
    </source>
</evidence>
<evidence type="ECO:0000255" key="2">
    <source>
        <dbReference type="PROSITE-ProRule" id="PRU01202"/>
    </source>
</evidence>
<gene>
    <name evidence="1" type="primary">purH</name>
    <name type="ordered locus">VFMJ11_2512</name>
</gene>
<protein>
    <recommendedName>
        <fullName evidence="1">Bifunctional purine biosynthesis protein PurH</fullName>
    </recommendedName>
    <domain>
        <recommendedName>
            <fullName evidence="1">Phosphoribosylaminoimidazolecarboxamide formyltransferase</fullName>
            <ecNumber evidence="1">2.1.2.3</ecNumber>
        </recommendedName>
        <alternativeName>
            <fullName evidence="1">AICAR transformylase</fullName>
        </alternativeName>
    </domain>
    <domain>
        <recommendedName>
            <fullName evidence="1">IMP cyclohydrolase</fullName>
            <ecNumber evidence="1">3.5.4.10</ecNumber>
        </recommendedName>
        <alternativeName>
            <fullName evidence="1">ATIC</fullName>
        </alternativeName>
        <alternativeName>
            <fullName evidence="1">IMP synthase</fullName>
        </alternativeName>
        <alternativeName>
            <fullName evidence="1">Inosinicase</fullName>
        </alternativeName>
    </domain>
</protein>
<feature type="chain" id="PRO_1000096106" description="Bifunctional purine biosynthesis protein PurH">
    <location>
        <begin position="1"/>
        <end position="530"/>
    </location>
</feature>
<feature type="domain" description="MGS-like" evidence="2">
    <location>
        <begin position="1"/>
        <end position="148"/>
    </location>
</feature>
<organism>
    <name type="scientific">Aliivibrio fischeri (strain MJ11)</name>
    <name type="common">Vibrio fischeri</name>
    <dbReference type="NCBI Taxonomy" id="388396"/>
    <lineage>
        <taxon>Bacteria</taxon>
        <taxon>Pseudomonadati</taxon>
        <taxon>Pseudomonadota</taxon>
        <taxon>Gammaproteobacteria</taxon>
        <taxon>Vibrionales</taxon>
        <taxon>Vibrionaceae</taxon>
        <taxon>Aliivibrio</taxon>
    </lineage>
</organism>
<proteinExistence type="inferred from homology"/>